<gene>
    <name evidence="1" type="primary">dnaE2</name>
    <name type="ordered locus">PA0669</name>
</gene>
<evidence type="ECO:0000255" key="1">
    <source>
        <dbReference type="HAMAP-Rule" id="MF_01902"/>
    </source>
</evidence>
<protein>
    <recommendedName>
        <fullName evidence="1">Error-prone DNA polymerase</fullName>
        <ecNumber evidence="1">2.7.7.7</ecNumber>
    </recommendedName>
</protein>
<dbReference type="EC" id="2.7.7.7" evidence="1"/>
<dbReference type="EMBL" id="AE004091">
    <property type="protein sequence ID" value="AAG04058.1"/>
    <property type="molecule type" value="Genomic_DNA"/>
</dbReference>
<dbReference type="PIR" id="F83561">
    <property type="entry name" value="F83561"/>
</dbReference>
<dbReference type="RefSeq" id="NP_249360.3">
    <property type="nucleotide sequence ID" value="NC_002516.2"/>
</dbReference>
<dbReference type="RefSeq" id="WP_010895514.1">
    <property type="nucleotide sequence ID" value="NZ_QZGE01000025.1"/>
</dbReference>
<dbReference type="SMR" id="Q9I5Q2"/>
<dbReference type="STRING" id="208964.PA0669"/>
<dbReference type="PaxDb" id="208964-PA0669"/>
<dbReference type="GeneID" id="880686"/>
<dbReference type="KEGG" id="pae:PA0669"/>
<dbReference type="PATRIC" id="fig|208964.12.peg.700"/>
<dbReference type="PseudoCAP" id="PA0669"/>
<dbReference type="HOGENOM" id="CLU_001600_4_0_6"/>
<dbReference type="InParanoid" id="Q9I5Q2"/>
<dbReference type="OrthoDB" id="9803237at2"/>
<dbReference type="PhylomeDB" id="Q9I5Q2"/>
<dbReference type="BioCyc" id="PAER208964:G1FZ6-679-MONOMER"/>
<dbReference type="Proteomes" id="UP000002438">
    <property type="component" value="Chromosome"/>
</dbReference>
<dbReference type="GO" id="GO:0005737">
    <property type="term" value="C:cytoplasm"/>
    <property type="evidence" value="ECO:0007669"/>
    <property type="project" value="UniProtKB-SubCell"/>
</dbReference>
<dbReference type="GO" id="GO:0008408">
    <property type="term" value="F:3'-5' exonuclease activity"/>
    <property type="evidence" value="ECO:0007669"/>
    <property type="project" value="InterPro"/>
</dbReference>
<dbReference type="GO" id="GO:0003887">
    <property type="term" value="F:DNA-directed DNA polymerase activity"/>
    <property type="evidence" value="ECO:0000318"/>
    <property type="project" value="GO_Central"/>
</dbReference>
<dbReference type="GO" id="GO:0003676">
    <property type="term" value="F:nucleic acid binding"/>
    <property type="evidence" value="ECO:0007669"/>
    <property type="project" value="InterPro"/>
</dbReference>
<dbReference type="GO" id="GO:0006281">
    <property type="term" value="P:DNA repair"/>
    <property type="evidence" value="ECO:0007669"/>
    <property type="project" value="UniProtKB-UniRule"/>
</dbReference>
<dbReference type="GO" id="GO:0006260">
    <property type="term" value="P:DNA replication"/>
    <property type="evidence" value="ECO:0007669"/>
    <property type="project" value="UniProtKB-KW"/>
</dbReference>
<dbReference type="CDD" id="cd04485">
    <property type="entry name" value="DnaE_OBF"/>
    <property type="match status" value="1"/>
</dbReference>
<dbReference type="CDD" id="cd07434">
    <property type="entry name" value="PHP_PolIIIA_DnaE2"/>
    <property type="match status" value="1"/>
</dbReference>
<dbReference type="FunFam" id="1.10.150.870:FF:000002">
    <property type="entry name" value="Error-prone DNA polymerase"/>
    <property type="match status" value="1"/>
</dbReference>
<dbReference type="Gene3D" id="1.10.150.870">
    <property type="match status" value="1"/>
</dbReference>
<dbReference type="Gene3D" id="3.20.20.140">
    <property type="entry name" value="Metal-dependent hydrolases"/>
    <property type="match status" value="1"/>
</dbReference>
<dbReference type="HAMAP" id="MF_01902">
    <property type="entry name" value="DNApol_error_prone"/>
    <property type="match status" value="1"/>
</dbReference>
<dbReference type="InterPro" id="IPR011708">
    <property type="entry name" value="DNA_pol3_alpha_NTPase_dom"/>
</dbReference>
<dbReference type="InterPro" id="IPR040982">
    <property type="entry name" value="DNA_pol3_finger"/>
</dbReference>
<dbReference type="InterPro" id="IPR023073">
    <property type="entry name" value="DnaE2"/>
</dbReference>
<dbReference type="InterPro" id="IPR004805">
    <property type="entry name" value="DnaE2/DnaE/PolC"/>
</dbReference>
<dbReference type="InterPro" id="IPR029460">
    <property type="entry name" value="DNAPol_HHH"/>
</dbReference>
<dbReference type="InterPro" id="IPR004365">
    <property type="entry name" value="NA-bd_OB_tRNA"/>
</dbReference>
<dbReference type="InterPro" id="IPR004013">
    <property type="entry name" value="PHP_dom"/>
</dbReference>
<dbReference type="InterPro" id="IPR003141">
    <property type="entry name" value="Pol/His_phosphatase_N"/>
</dbReference>
<dbReference type="InterPro" id="IPR016195">
    <property type="entry name" value="Pol/histidinol_Pase-like"/>
</dbReference>
<dbReference type="NCBIfam" id="TIGR00594">
    <property type="entry name" value="polc"/>
    <property type="match status" value="1"/>
</dbReference>
<dbReference type="NCBIfam" id="NF004225">
    <property type="entry name" value="PRK05672.1"/>
    <property type="match status" value="1"/>
</dbReference>
<dbReference type="PANTHER" id="PTHR32294">
    <property type="entry name" value="DNA POLYMERASE III SUBUNIT ALPHA"/>
    <property type="match status" value="1"/>
</dbReference>
<dbReference type="PANTHER" id="PTHR32294:SF4">
    <property type="entry name" value="ERROR-PRONE DNA POLYMERASE"/>
    <property type="match status" value="1"/>
</dbReference>
<dbReference type="Pfam" id="PF07733">
    <property type="entry name" value="DNA_pol3_alpha"/>
    <property type="match status" value="1"/>
</dbReference>
<dbReference type="Pfam" id="PF17657">
    <property type="entry name" value="DNA_pol3_finger"/>
    <property type="match status" value="1"/>
</dbReference>
<dbReference type="Pfam" id="PF14579">
    <property type="entry name" value="HHH_6"/>
    <property type="match status" value="1"/>
</dbReference>
<dbReference type="Pfam" id="PF02811">
    <property type="entry name" value="PHP"/>
    <property type="match status" value="1"/>
</dbReference>
<dbReference type="Pfam" id="PF01336">
    <property type="entry name" value="tRNA_anti-codon"/>
    <property type="match status" value="1"/>
</dbReference>
<dbReference type="SMART" id="SM00481">
    <property type="entry name" value="POLIIIAc"/>
    <property type="match status" value="1"/>
</dbReference>
<dbReference type="SUPFAM" id="SSF89550">
    <property type="entry name" value="PHP domain-like"/>
    <property type="match status" value="1"/>
</dbReference>
<feature type="chain" id="PRO_0000103388" description="Error-prone DNA polymerase">
    <location>
        <begin position="1"/>
        <end position="1031"/>
    </location>
</feature>
<sequence>MAAWLVRMSAYAELHCLSNFSFQRGASSATELFARAARLGYRALAITDECSLAGIVRAWQAAREHQVQLIVGSEIRLEQGPKLVLLAEDLEGYQNLCRLITRGRRQADKGHYRLLREDLQQPLAGLLAIWLPNDHGDEQAAWLRERFPQRLWLGVELHRGADDDARLDKLLALASHLRLPPVACGDVHMHARGRRALQDCMTAIRNHLPVSEAGAYLFPNGERHLRTLEALQGIYPQALLAETLKIAERCRFDLEQLKYQYPRELVPAGHDPASWLRHLTEQGIARRWPNGASAKVRKQIERELELIAELGYESYFLTVQDIVAFARGRKILCQGRGSAANSAVCFALGITELDPDRTNLLFERFLSRERNEPPDIDVDFEHERREEVIQYVFTRYGRQRAALTAVVSTYHGAGAVRDVAKALGLPPEQVDVLANCCGRWSDQAPSAERLEEAGFDPQSPILRRVLALTDELIGFPRHLSQHPGGFVISEQPLDTLVPVENASMAERTVIQWDKDDLDAVGLLKVDVLALGMLSALRRSFDLIHALRGGKRLSIASIPSEDPATYEMISRADTIGVFQIESRAQMAMLPRLRPQKFYDLVIQVAIVRPGPIQGDMVHPYLRRRNGEEPVAYPSAELEEVFERTLGVPLFQEQVMELAIVAADYTPGEADELRRSMAAWKRHGGLEHHRERLTRGMLAKGYEADFAARIFEQIKGFGSYGFPESHAASFALLTYASSWLKRHEPAAFACALINSWPMGFYSPDQLLQDARRHALQTRPVDVRHSGWDCSLESFGQAQPAIRLGLRMIRGFREEDARRIEQVREAEPFLDVHDLGRRARLDARALELLADAGALRGLAGHRHKARWAVASVEPQLPLFAEGTAIEESTVSLPLPSRGEELLSDYALLGTTLGPHPLKLLRGQLKARRCRDSRELAKLGHGRPIRVAGLVVGRQRPQTASGITFITLEDEFGMVNVVVRHDLAERQRRPFLESRLLQVEGILESSGEVRHVIAGRLHDLTPLLTGLDVRSRDFH</sequence>
<comment type="function">
    <text evidence="1">DNA polymerase involved in damage-induced mutagenesis and translesion synthesis (TLS). It is not the major replicative DNA polymerase.</text>
</comment>
<comment type="catalytic activity">
    <reaction evidence="1">
        <text>DNA(n) + a 2'-deoxyribonucleoside 5'-triphosphate = DNA(n+1) + diphosphate</text>
        <dbReference type="Rhea" id="RHEA:22508"/>
        <dbReference type="Rhea" id="RHEA-COMP:17339"/>
        <dbReference type="Rhea" id="RHEA-COMP:17340"/>
        <dbReference type="ChEBI" id="CHEBI:33019"/>
        <dbReference type="ChEBI" id="CHEBI:61560"/>
        <dbReference type="ChEBI" id="CHEBI:173112"/>
        <dbReference type="EC" id="2.7.7.7"/>
    </reaction>
</comment>
<comment type="subcellular location">
    <subcellularLocation>
        <location evidence="1">Cytoplasm</location>
    </subcellularLocation>
</comment>
<comment type="similarity">
    <text evidence="1">Belongs to the DNA polymerase type-C family. DnaE2 subfamily.</text>
</comment>
<proteinExistence type="inferred from homology"/>
<reference key="1">
    <citation type="journal article" date="2000" name="Nature">
        <title>Complete genome sequence of Pseudomonas aeruginosa PAO1, an opportunistic pathogen.</title>
        <authorList>
            <person name="Stover C.K."/>
            <person name="Pham X.-Q.T."/>
            <person name="Erwin A.L."/>
            <person name="Mizoguchi S.D."/>
            <person name="Warrener P."/>
            <person name="Hickey M.J."/>
            <person name="Brinkman F.S.L."/>
            <person name="Hufnagle W.O."/>
            <person name="Kowalik D.J."/>
            <person name="Lagrou M."/>
            <person name="Garber R.L."/>
            <person name="Goltry L."/>
            <person name="Tolentino E."/>
            <person name="Westbrock-Wadman S."/>
            <person name="Yuan Y."/>
            <person name="Brody L.L."/>
            <person name="Coulter S.N."/>
            <person name="Folger K.R."/>
            <person name="Kas A."/>
            <person name="Larbig K."/>
            <person name="Lim R.M."/>
            <person name="Smith K.A."/>
            <person name="Spencer D.H."/>
            <person name="Wong G.K.-S."/>
            <person name="Wu Z."/>
            <person name="Paulsen I.T."/>
            <person name="Reizer J."/>
            <person name="Saier M.H. Jr."/>
            <person name="Hancock R.E.W."/>
            <person name="Lory S."/>
            <person name="Olson M.V."/>
        </authorList>
    </citation>
    <scope>NUCLEOTIDE SEQUENCE [LARGE SCALE GENOMIC DNA]</scope>
    <source>
        <strain>ATCC 15692 / DSM 22644 / CIP 104116 / JCM 14847 / LMG 12228 / 1C / PRS 101 / PAO1</strain>
    </source>
</reference>
<name>DNAE2_PSEAE</name>
<keyword id="KW-0963">Cytoplasm</keyword>
<keyword id="KW-0227">DNA damage</keyword>
<keyword id="KW-0234">DNA repair</keyword>
<keyword id="KW-0235">DNA replication</keyword>
<keyword id="KW-0239">DNA-directed DNA polymerase</keyword>
<keyword id="KW-0548">Nucleotidyltransferase</keyword>
<keyword id="KW-1185">Reference proteome</keyword>
<keyword id="KW-0808">Transferase</keyword>
<accession>Q9I5Q2</accession>
<organism>
    <name type="scientific">Pseudomonas aeruginosa (strain ATCC 15692 / DSM 22644 / CIP 104116 / JCM 14847 / LMG 12228 / 1C / PRS 101 / PAO1)</name>
    <dbReference type="NCBI Taxonomy" id="208964"/>
    <lineage>
        <taxon>Bacteria</taxon>
        <taxon>Pseudomonadati</taxon>
        <taxon>Pseudomonadota</taxon>
        <taxon>Gammaproteobacteria</taxon>
        <taxon>Pseudomonadales</taxon>
        <taxon>Pseudomonadaceae</taxon>
        <taxon>Pseudomonas</taxon>
    </lineage>
</organism>